<accession>C1CDN0</accession>
<proteinExistence type="inferred from homology"/>
<name>THII_STRZJ</name>
<feature type="chain" id="PRO_1000196935" description="Probable tRNA sulfurtransferase">
    <location>
        <begin position="1"/>
        <end position="404"/>
    </location>
</feature>
<feature type="domain" description="THUMP" evidence="1">
    <location>
        <begin position="60"/>
        <end position="165"/>
    </location>
</feature>
<feature type="binding site" evidence="1">
    <location>
        <begin position="183"/>
        <end position="184"/>
    </location>
    <ligand>
        <name>ATP</name>
        <dbReference type="ChEBI" id="CHEBI:30616"/>
    </ligand>
</feature>
<feature type="binding site" evidence="1">
    <location>
        <begin position="208"/>
        <end position="209"/>
    </location>
    <ligand>
        <name>ATP</name>
        <dbReference type="ChEBI" id="CHEBI:30616"/>
    </ligand>
</feature>
<feature type="binding site" evidence="1">
    <location>
        <position position="265"/>
    </location>
    <ligand>
        <name>ATP</name>
        <dbReference type="ChEBI" id="CHEBI:30616"/>
    </ligand>
</feature>
<feature type="binding site" evidence="1">
    <location>
        <position position="287"/>
    </location>
    <ligand>
        <name>ATP</name>
        <dbReference type="ChEBI" id="CHEBI:30616"/>
    </ligand>
</feature>
<feature type="binding site" evidence="1">
    <location>
        <position position="296"/>
    </location>
    <ligand>
        <name>ATP</name>
        <dbReference type="ChEBI" id="CHEBI:30616"/>
    </ligand>
</feature>
<dbReference type="EC" id="2.8.1.4" evidence="1"/>
<dbReference type="EMBL" id="CP000919">
    <property type="protein sequence ID" value="ACO19551.1"/>
    <property type="molecule type" value="Genomic_DNA"/>
</dbReference>
<dbReference type="RefSeq" id="WP_001200062.1">
    <property type="nucleotide sequence ID" value="NC_012466.1"/>
</dbReference>
<dbReference type="SMR" id="C1CDN0"/>
<dbReference type="KEGG" id="sjj:SPJ_0823"/>
<dbReference type="HOGENOM" id="CLU_037952_4_0_9"/>
<dbReference type="UniPathway" id="UPA00060"/>
<dbReference type="Proteomes" id="UP000002206">
    <property type="component" value="Chromosome"/>
</dbReference>
<dbReference type="GO" id="GO:0005829">
    <property type="term" value="C:cytosol"/>
    <property type="evidence" value="ECO:0007669"/>
    <property type="project" value="TreeGrafter"/>
</dbReference>
<dbReference type="GO" id="GO:0005524">
    <property type="term" value="F:ATP binding"/>
    <property type="evidence" value="ECO:0007669"/>
    <property type="project" value="UniProtKB-UniRule"/>
</dbReference>
<dbReference type="GO" id="GO:0004810">
    <property type="term" value="F:CCA tRNA nucleotidyltransferase activity"/>
    <property type="evidence" value="ECO:0007669"/>
    <property type="project" value="InterPro"/>
</dbReference>
<dbReference type="GO" id="GO:0000049">
    <property type="term" value="F:tRNA binding"/>
    <property type="evidence" value="ECO:0007669"/>
    <property type="project" value="UniProtKB-UniRule"/>
</dbReference>
<dbReference type="GO" id="GO:0140741">
    <property type="term" value="F:tRNA-uracil-4 sulfurtransferase activity"/>
    <property type="evidence" value="ECO:0007669"/>
    <property type="project" value="UniProtKB-EC"/>
</dbReference>
<dbReference type="GO" id="GO:0009228">
    <property type="term" value="P:thiamine biosynthetic process"/>
    <property type="evidence" value="ECO:0007669"/>
    <property type="project" value="UniProtKB-KW"/>
</dbReference>
<dbReference type="GO" id="GO:0009229">
    <property type="term" value="P:thiamine diphosphate biosynthetic process"/>
    <property type="evidence" value="ECO:0007669"/>
    <property type="project" value="UniProtKB-UniRule"/>
</dbReference>
<dbReference type="GO" id="GO:0052837">
    <property type="term" value="P:thiazole biosynthetic process"/>
    <property type="evidence" value="ECO:0007669"/>
    <property type="project" value="TreeGrafter"/>
</dbReference>
<dbReference type="GO" id="GO:0002937">
    <property type="term" value="P:tRNA 4-thiouridine biosynthesis"/>
    <property type="evidence" value="ECO:0007669"/>
    <property type="project" value="TreeGrafter"/>
</dbReference>
<dbReference type="CDD" id="cd01712">
    <property type="entry name" value="PPase_ThiI"/>
    <property type="match status" value="1"/>
</dbReference>
<dbReference type="CDD" id="cd11716">
    <property type="entry name" value="THUMP_ThiI"/>
    <property type="match status" value="1"/>
</dbReference>
<dbReference type="FunFam" id="3.30.2130.30:FF:000006">
    <property type="entry name" value="Probable tRNA sulfurtransferase"/>
    <property type="match status" value="1"/>
</dbReference>
<dbReference type="FunFam" id="3.40.50.620:FF:000053">
    <property type="entry name" value="Probable tRNA sulfurtransferase"/>
    <property type="match status" value="1"/>
</dbReference>
<dbReference type="Gene3D" id="3.30.2130.30">
    <property type="match status" value="1"/>
</dbReference>
<dbReference type="Gene3D" id="3.40.50.620">
    <property type="entry name" value="HUPs"/>
    <property type="match status" value="1"/>
</dbReference>
<dbReference type="HAMAP" id="MF_00021">
    <property type="entry name" value="ThiI"/>
    <property type="match status" value="1"/>
</dbReference>
<dbReference type="InterPro" id="IPR014729">
    <property type="entry name" value="Rossmann-like_a/b/a_fold"/>
</dbReference>
<dbReference type="InterPro" id="IPR020536">
    <property type="entry name" value="ThiI_AANH"/>
</dbReference>
<dbReference type="InterPro" id="IPR054173">
    <property type="entry name" value="ThiI_fer"/>
</dbReference>
<dbReference type="InterPro" id="IPR049961">
    <property type="entry name" value="ThiI_N"/>
</dbReference>
<dbReference type="InterPro" id="IPR004114">
    <property type="entry name" value="THUMP_dom"/>
</dbReference>
<dbReference type="InterPro" id="IPR049962">
    <property type="entry name" value="THUMP_ThiI"/>
</dbReference>
<dbReference type="InterPro" id="IPR003720">
    <property type="entry name" value="tRNA_STrfase"/>
</dbReference>
<dbReference type="InterPro" id="IPR050102">
    <property type="entry name" value="tRNA_sulfurtransferase_ThiI"/>
</dbReference>
<dbReference type="NCBIfam" id="TIGR00342">
    <property type="entry name" value="tRNA uracil 4-sulfurtransferase ThiI"/>
    <property type="match status" value="1"/>
</dbReference>
<dbReference type="PANTHER" id="PTHR43209">
    <property type="entry name" value="TRNA SULFURTRANSFERASE"/>
    <property type="match status" value="1"/>
</dbReference>
<dbReference type="PANTHER" id="PTHR43209:SF1">
    <property type="entry name" value="TRNA SULFURTRANSFERASE"/>
    <property type="match status" value="1"/>
</dbReference>
<dbReference type="Pfam" id="PF02568">
    <property type="entry name" value="ThiI"/>
    <property type="match status" value="1"/>
</dbReference>
<dbReference type="Pfam" id="PF22025">
    <property type="entry name" value="ThiI_fer"/>
    <property type="match status" value="1"/>
</dbReference>
<dbReference type="Pfam" id="PF02926">
    <property type="entry name" value="THUMP"/>
    <property type="match status" value="1"/>
</dbReference>
<dbReference type="SMART" id="SM00981">
    <property type="entry name" value="THUMP"/>
    <property type="match status" value="1"/>
</dbReference>
<dbReference type="SUPFAM" id="SSF52402">
    <property type="entry name" value="Adenine nucleotide alpha hydrolases-like"/>
    <property type="match status" value="1"/>
</dbReference>
<dbReference type="SUPFAM" id="SSF143437">
    <property type="entry name" value="THUMP domain-like"/>
    <property type="match status" value="1"/>
</dbReference>
<dbReference type="PROSITE" id="PS51165">
    <property type="entry name" value="THUMP"/>
    <property type="match status" value="1"/>
</dbReference>
<evidence type="ECO:0000255" key="1">
    <source>
        <dbReference type="HAMAP-Rule" id="MF_00021"/>
    </source>
</evidence>
<organism>
    <name type="scientific">Streptococcus pneumoniae (strain JJA)</name>
    <dbReference type="NCBI Taxonomy" id="488222"/>
    <lineage>
        <taxon>Bacteria</taxon>
        <taxon>Bacillati</taxon>
        <taxon>Bacillota</taxon>
        <taxon>Bacilli</taxon>
        <taxon>Lactobacillales</taxon>
        <taxon>Streptococcaceae</taxon>
        <taxon>Streptococcus</taxon>
    </lineage>
</organism>
<gene>
    <name evidence="1" type="primary">thiI</name>
    <name type="ordered locus">SPJ_0823</name>
</gene>
<sequence>MQYSEIMIRYGELSTKGKNRMRFINKLRNNISDVLSIYPQVKVTADRDRAHAYLNGADYTAVAESLKQVFGIQNFSPVYKVEKSVEVLKSAVQEIMQDIYKEGMTFKISSKRSDHTFELDSRELNQTLGGAVFEAIPNVQAQMKSPDINLQVEIREEAAYLSYETVRGAGGLPVGTSGKGMLMLSGGIDSPVAGYLALKRGVDIEAVHFASPPYTSPGALKKAQDLTRKLTKFGGNIQFIEVPFTEIQEEIKAKAPEAYLMTLTRRFMMRITDRIREVRNGLVIINGESLGQVASQTLESMKAINAVTNTPIIRPVVTMDKLEIIDIAQEIDTFDISIQPFEDCCTIFAPDRPKTNPKIKNAEQYEARMDVEGLVERAVAGIMITEITPQAEKDEVDDLIDNLL</sequence>
<reference key="1">
    <citation type="journal article" date="2010" name="Genome Biol.">
        <title>Structure and dynamics of the pan-genome of Streptococcus pneumoniae and closely related species.</title>
        <authorList>
            <person name="Donati C."/>
            <person name="Hiller N.L."/>
            <person name="Tettelin H."/>
            <person name="Muzzi A."/>
            <person name="Croucher N.J."/>
            <person name="Angiuoli S.V."/>
            <person name="Oggioni M."/>
            <person name="Dunning Hotopp J.C."/>
            <person name="Hu F.Z."/>
            <person name="Riley D.R."/>
            <person name="Covacci A."/>
            <person name="Mitchell T.J."/>
            <person name="Bentley S.D."/>
            <person name="Kilian M."/>
            <person name="Ehrlich G.D."/>
            <person name="Rappuoli R."/>
            <person name="Moxon E.R."/>
            <person name="Masignani V."/>
        </authorList>
    </citation>
    <scope>NUCLEOTIDE SEQUENCE [LARGE SCALE GENOMIC DNA]</scope>
    <source>
        <strain>JJA</strain>
    </source>
</reference>
<keyword id="KW-0067">ATP-binding</keyword>
<keyword id="KW-0963">Cytoplasm</keyword>
<keyword id="KW-0547">Nucleotide-binding</keyword>
<keyword id="KW-0694">RNA-binding</keyword>
<keyword id="KW-0784">Thiamine biosynthesis</keyword>
<keyword id="KW-0808">Transferase</keyword>
<keyword id="KW-0820">tRNA-binding</keyword>
<protein>
    <recommendedName>
        <fullName evidence="1">Probable tRNA sulfurtransferase</fullName>
        <ecNumber evidence="1">2.8.1.4</ecNumber>
    </recommendedName>
    <alternativeName>
        <fullName evidence="1">Sulfur carrier protein ThiS sulfurtransferase</fullName>
    </alternativeName>
    <alternativeName>
        <fullName evidence="1">Thiamine biosynthesis protein ThiI</fullName>
    </alternativeName>
    <alternativeName>
        <fullName evidence="1">tRNA 4-thiouridine synthase</fullName>
    </alternativeName>
</protein>
<comment type="function">
    <text evidence="1">Catalyzes the ATP-dependent transfer of a sulfur to tRNA to produce 4-thiouridine in position 8 of tRNAs, which functions as a near-UV photosensor. Also catalyzes the transfer of sulfur to the sulfur carrier protein ThiS, forming ThiS-thiocarboxylate. This is a step in the synthesis of thiazole, in the thiamine biosynthesis pathway. The sulfur is donated as persulfide by IscS.</text>
</comment>
<comment type="catalytic activity">
    <reaction evidence="1">
        <text>[ThiI sulfur-carrier protein]-S-sulfanyl-L-cysteine + a uridine in tRNA + 2 reduced [2Fe-2S]-[ferredoxin] + ATP + H(+) = [ThiI sulfur-carrier protein]-L-cysteine + a 4-thiouridine in tRNA + 2 oxidized [2Fe-2S]-[ferredoxin] + AMP + diphosphate</text>
        <dbReference type="Rhea" id="RHEA:24176"/>
        <dbReference type="Rhea" id="RHEA-COMP:10000"/>
        <dbReference type="Rhea" id="RHEA-COMP:10001"/>
        <dbReference type="Rhea" id="RHEA-COMP:13337"/>
        <dbReference type="Rhea" id="RHEA-COMP:13338"/>
        <dbReference type="Rhea" id="RHEA-COMP:13339"/>
        <dbReference type="Rhea" id="RHEA-COMP:13340"/>
        <dbReference type="ChEBI" id="CHEBI:15378"/>
        <dbReference type="ChEBI" id="CHEBI:29950"/>
        <dbReference type="ChEBI" id="CHEBI:30616"/>
        <dbReference type="ChEBI" id="CHEBI:33019"/>
        <dbReference type="ChEBI" id="CHEBI:33737"/>
        <dbReference type="ChEBI" id="CHEBI:33738"/>
        <dbReference type="ChEBI" id="CHEBI:61963"/>
        <dbReference type="ChEBI" id="CHEBI:65315"/>
        <dbReference type="ChEBI" id="CHEBI:136798"/>
        <dbReference type="ChEBI" id="CHEBI:456215"/>
        <dbReference type="EC" id="2.8.1.4"/>
    </reaction>
</comment>
<comment type="catalytic activity">
    <reaction evidence="1">
        <text>[ThiS sulfur-carrier protein]-C-terminal Gly-Gly-AMP + S-sulfanyl-L-cysteinyl-[cysteine desulfurase] + AH2 = [ThiS sulfur-carrier protein]-C-terminal-Gly-aminoethanethioate + L-cysteinyl-[cysteine desulfurase] + A + AMP + 2 H(+)</text>
        <dbReference type="Rhea" id="RHEA:43340"/>
        <dbReference type="Rhea" id="RHEA-COMP:12157"/>
        <dbReference type="Rhea" id="RHEA-COMP:12158"/>
        <dbReference type="Rhea" id="RHEA-COMP:12910"/>
        <dbReference type="Rhea" id="RHEA-COMP:19908"/>
        <dbReference type="ChEBI" id="CHEBI:13193"/>
        <dbReference type="ChEBI" id="CHEBI:15378"/>
        <dbReference type="ChEBI" id="CHEBI:17499"/>
        <dbReference type="ChEBI" id="CHEBI:29950"/>
        <dbReference type="ChEBI" id="CHEBI:61963"/>
        <dbReference type="ChEBI" id="CHEBI:90618"/>
        <dbReference type="ChEBI" id="CHEBI:232372"/>
        <dbReference type="ChEBI" id="CHEBI:456215"/>
    </reaction>
</comment>
<comment type="pathway">
    <text evidence="1">Cofactor biosynthesis; thiamine diphosphate biosynthesis.</text>
</comment>
<comment type="subcellular location">
    <subcellularLocation>
        <location evidence="1">Cytoplasm</location>
    </subcellularLocation>
</comment>
<comment type="similarity">
    <text evidence="1">Belongs to the ThiI family.</text>
</comment>